<organism>
    <name type="scientific">Escherichia coli O9:H4 (strain HS)</name>
    <dbReference type="NCBI Taxonomy" id="331112"/>
    <lineage>
        <taxon>Bacteria</taxon>
        <taxon>Pseudomonadati</taxon>
        <taxon>Pseudomonadota</taxon>
        <taxon>Gammaproteobacteria</taxon>
        <taxon>Enterobacterales</taxon>
        <taxon>Enterobacteriaceae</taxon>
        <taxon>Escherichia</taxon>
    </lineage>
</organism>
<evidence type="ECO:0000255" key="1">
    <source>
        <dbReference type="HAMAP-Rule" id="MF_01620"/>
    </source>
</evidence>
<comment type="function">
    <text evidence="1">Catalyzes the final step of fatty acid oxidation in which acetyl-CoA is released and the CoA ester of a fatty acid two carbons shorter is formed.</text>
</comment>
<comment type="catalytic activity">
    <reaction evidence="1">
        <text>an acyl-CoA + acetyl-CoA = a 3-oxoacyl-CoA + CoA</text>
        <dbReference type="Rhea" id="RHEA:21564"/>
        <dbReference type="ChEBI" id="CHEBI:57287"/>
        <dbReference type="ChEBI" id="CHEBI:57288"/>
        <dbReference type="ChEBI" id="CHEBI:58342"/>
        <dbReference type="ChEBI" id="CHEBI:90726"/>
        <dbReference type="EC" id="2.3.1.16"/>
    </reaction>
</comment>
<comment type="pathway">
    <text evidence="1">Lipid metabolism; fatty acid beta-oxidation.</text>
</comment>
<comment type="subunit">
    <text evidence="1">Heterotetramer of two alpha chains (FadB) and two beta chains (FadA).</text>
</comment>
<comment type="subcellular location">
    <subcellularLocation>
        <location evidence="1">Cytoplasm</location>
    </subcellularLocation>
</comment>
<comment type="similarity">
    <text evidence="1">Belongs to the thiolase-like superfamily. Thiolase family.</text>
</comment>
<proteinExistence type="inferred from homology"/>
<gene>
    <name evidence="1" type="primary">fadA</name>
    <name type="ordered locus">EcHS_A4068</name>
</gene>
<reference key="1">
    <citation type="journal article" date="2008" name="J. Bacteriol.">
        <title>The pangenome structure of Escherichia coli: comparative genomic analysis of E. coli commensal and pathogenic isolates.</title>
        <authorList>
            <person name="Rasko D.A."/>
            <person name="Rosovitz M.J."/>
            <person name="Myers G.S.A."/>
            <person name="Mongodin E.F."/>
            <person name="Fricke W.F."/>
            <person name="Gajer P."/>
            <person name="Crabtree J."/>
            <person name="Sebaihia M."/>
            <person name="Thomson N.R."/>
            <person name="Chaudhuri R."/>
            <person name="Henderson I.R."/>
            <person name="Sperandio V."/>
            <person name="Ravel J."/>
        </authorList>
    </citation>
    <scope>NUCLEOTIDE SEQUENCE [LARGE SCALE GENOMIC DNA]</scope>
    <source>
        <strain>HS</strain>
    </source>
</reference>
<protein>
    <recommendedName>
        <fullName evidence="1">3-ketoacyl-CoA thiolase</fullName>
        <ecNumber evidence="1">2.3.1.16</ecNumber>
    </recommendedName>
    <alternativeName>
        <fullName evidence="1">Acetyl-CoA acyltransferase</fullName>
    </alternativeName>
    <alternativeName>
        <fullName evidence="1">Beta-ketothiolase</fullName>
    </alternativeName>
    <alternativeName>
        <fullName evidence="1">Fatty acid oxidation complex subunit beta</fullName>
    </alternativeName>
</protein>
<keyword id="KW-0012">Acyltransferase</keyword>
<keyword id="KW-0963">Cytoplasm</keyword>
<keyword id="KW-0276">Fatty acid metabolism</keyword>
<keyword id="KW-0442">Lipid degradation</keyword>
<keyword id="KW-0443">Lipid metabolism</keyword>
<keyword id="KW-0808">Transferase</keyword>
<feature type="chain" id="PRO_0000323546" description="3-ketoacyl-CoA thiolase">
    <location>
        <begin position="1"/>
        <end position="387"/>
    </location>
</feature>
<feature type="active site" description="Acyl-thioester intermediate" evidence="1">
    <location>
        <position position="91"/>
    </location>
</feature>
<feature type="active site" description="Proton acceptor" evidence="1">
    <location>
        <position position="343"/>
    </location>
</feature>
<feature type="active site" description="Proton acceptor" evidence="1">
    <location>
        <position position="373"/>
    </location>
</feature>
<name>FADA_ECOHS</name>
<dbReference type="EC" id="2.3.1.16" evidence="1"/>
<dbReference type="EMBL" id="CP000802">
    <property type="protein sequence ID" value="ABV08254.1"/>
    <property type="molecule type" value="Genomic_DNA"/>
</dbReference>
<dbReference type="RefSeq" id="WP_000438729.1">
    <property type="nucleotide sequence ID" value="NC_009800.1"/>
</dbReference>
<dbReference type="SMR" id="A8A6V0"/>
<dbReference type="KEGG" id="ecx:EcHS_A4068"/>
<dbReference type="HOGENOM" id="CLU_031026_2_3_6"/>
<dbReference type="UniPathway" id="UPA00659"/>
<dbReference type="GO" id="GO:0005737">
    <property type="term" value="C:cytoplasm"/>
    <property type="evidence" value="ECO:0007669"/>
    <property type="project" value="UniProtKB-SubCell"/>
</dbReference>
<dbReference type="GO" id="GO:0003988">
    <property type="term" value="F:acetyl-CoA C-acyltransferase activity"/>
    <property type="evidence" value="ECO:0007669"/>
    <property type="project" value="UniProtKB-UniRule"/>
</dbReference>
<dbReference type="GO" id="GO:0006635">
    <property type="term" value="P:fatty acid beta-oxidation"/>
    <property type="evidence" value="ECO:0007669"/>
    <property type="project" value="UniProtKB-UniRule"/>
</dbReference>
<dbReference type="GO" id="GO:0010124">
    <property type="term" value="P:phenylacetate catabolic process"/>
    <property type="evidence" value="ECO:0007669"/>
    <property type="project" value="TreeGrafter"/>
</dbReference>
<dbReference type="CDD" id="cd00751">
    <property type="entry name" value="thiolase"/>
    <property type="match status" value="1"/>
</dbReference>
<dbReference type="FunFam" id="3.40.47.10:FF:000010">
    <property type="entry name" value="Acetyl-CoA acetyltransferase (Thiolase)"/>
    <property type="match status" value="1"/>
</dbReference>
<dbReference type="Gene3D" id="3.40.47.10">
    <property type="match status" value="2"/>
</dbReference>
<dbReference type="HAMAP" id="MF_01620">
    <property type="entry name" value="FadA"/>
    <property type="match status" value="1"/>
</dbReference>
<dbReference type="InterPro" id="IPR012805">
    <property type="entry name" value="FadA"/>
</dbReference>
<dbReference type="InterPro" id="IPR002155">
    <property type="entry name" value="Thiolase"/>
</dbReference>
<dbReference type="InterPro" id="IPR016039">
    <property type="entry name" value="Thiolase-like"/>
</dbReference>
<dbReference type="InterPro" id="IPR050215">
    <property type="entry name" value="Thiolase-like_sf_Thiolase"/>
</dbReference>
<dbReference type="InterPro" id="IPR020615">
    <property type="entry name" value="Thiolase_acyl_enz_int_AS"/>
</dbReference>
<dbReference type="InterPro" id="IPR020610">
    <property type="entry name" value="Thiolase_AS"/>
</dbReference>
<dbReference type="InterPro" id="IPR020617">
    <property type="entry name" value="Thiolase_C"/>
</dbReference>
<dbReference type="InterPro" id="IPR020613">
    <property type="entry name" value="Thiolase_CS"/>
</dbReference>
<dbReference type="InterPro" id="IPR020616">
    <property type="entry name" value="Thiolase_N"/>
</dbReference>
<dbReference type="NCBIfam" id="TIGR01930">
    <property type="entry name" value="AcCoA-C-Actrans"/>
    <property type="match status" value="1"/>
</dbReference>
<dbReference type="NCBIfam" id="TIGR02445">
    <property type="entry name" value="fadA"/>
    <property type="match status" value="1"/>
</dbReference>
<dbReference type="NCBIfam" id="NF006510">
    <property type="entry name" value="PRK08947.1"/>
    <property type="match status" value="1"/>
</dbReference>
<dbReference type="PANTHER" id="PTHR43853:SF11">
    <property type="entry name" value="3-KETOACYL-COA THIOLASE FADA"/>
    <property type="match status" value="1"/>
</dbReference>
<dbReference type="PANTHER" id="PTHR43853">
    <property type="entry name" value="3-KETOACYL-COA THIOLASE, PEROXISOMAL"/>
    <property type="match status" value="1"/>
</dbReference>
<dbReference type="Pfam" id="PF02803">
    <property type="entry name" value="Thiolase_C"/>
    <property type="match status" value="1"/>
</dbReference>
<dbReference type="Pfam" id="PF00108">
    <property type="entry name" value="Thiolase_N"/>
    <property type="match status" value="1"/>
</dbReference>
<dbReference type="PIRSF" id="PIRSF000429">
    <property type="entry name" value="Ac-CoA_Ac_transf"/>
    <property type="match status" value="1"/>
</dbReference>
<dbReference type="SUPFAM" id="SSF53901">
    <property type="entry name" value="Thiolase-like"/>
    <property type="match status" value="2"/>
</dbReference>
<dbReference type="PROSITE" id="PS00098">
    <property type="entry name" value="THIOLASE_1"/>
    <property type="match status" value="1"/>
</dbReference>
<dbReference type="PROSITE" id="PS00737">
    <property type="entry name" value="THIOLASE_2"/>
    <property type="match status" value="1"/>
</dbReference>
<dbReference type="PROSITE" id="PS00099">
    <property type="entry name" value="THIOLASE_3"/>
    <property type="match status" value="1"/>
</dbReference>
<sequence length="387" mass="40864">MEQVVIVDAIRTPMGRSKGGAFRNVRAEDLSAHLMRSLLARNPALEAAALDDIYWGCVQQTLEQGFNIARNAALLAEVPHSVPAVTVNRLCGSSMQALHDAARMIMTGDAQACLVGGVEHMGHVPMSHGVDFHPGLSRNVAKAAGMMGLTAEMLARMHGISREMQDAFAARSHARAWAATQSAAFKNEIIPTGGHDADGVLKQFNYDEVIRPETTVEALATLRPAFDPVNGTVTAGTSSALSDGAAAMLVMSESRAHELGLKPRARVRSMAVVGCDPSIMGYGPVPASKLALKKAGLSASDIGVFEMNEAFAAQILPCIKDLGLMEQIDEKINLNGGAIALGHPLGCSGARISTTLLNLMERKDVQFGLATMCIGLGQGIATVFERV</sequence>
<accession>A8A6V0</accession>